<feature type="transit peptide" description="Chloroplast" evidence="1">
    <location>
        <begin position="1"/>
        <end position="56"/>
    </location>
</feature>
<feature type="chain" id="PRO_0000031514" description="Ribulose bisphosphate carboxylase small subunit, chloroplastic 3" evidence="1">
    <location>
        <begin position="57"/>
        <end position="177"/>
    </location>
</feature>
<organism>
    <name type="scientific">Lemna gibba</name>
    <name type="common">Swollen duckweed</name>
    <dbReference type="NCBI Taxonomy" id="4470"/>
    <lineage>
        <taxon>Eukaryota</taxon>
        <taxon>Viridiplantae</taxon>
        <taxon>Streptophyta</taxon>
        <taxon>Embryophyta</taxon>
        <taxon>Tracheophyta</taxon>
        <taxon>Spermatophyta</taxon>
        <taxon>Magnoliopsida</taxon>
        <taxon>Liliopsida</taxon>
        <taxon>Araceae</taxon>
        <taxon>Lemnoideae</taxon>
        <taxon>Lemna</taxon>
    </lineage>
</organism>
<evidence type="ECO:0000255" key="1">
    <source>
        <dbReference type="HAMAP-Rule" id="MF_00860"/>
    </source>
</evidence>
<evidence type="ECO:0000269" key="2">
    <source>
    </source>
</evidence>
<evidence type="ECO:0000303" key="3">
    <source>
    </source>
</evidence>
<proteinExistence type="evidence at transcript level"/>
<dbReference type="EMBL" id="X17233">
    <property type="protein sequence ID" value="CAA35102.1"/>
    <property type="molecule type" value="Genomic_DNA"/>
</dbReference>
<dbReference type="PIR" id="S11681">
    <property type="entry name" value="RKDWS4"/>
</dbReference>
<dbReference type="SMR" id="P19309"/>
<dbReference type="GO" id="GO:0009507">
    <property type="term" value="C:chloroplast"/>
    <property type="evidence" value="ECO:0007669"/>
    <property type="project" value="UniProtKB-SubCell"/>
</dbReference>
<dbReference type="GO" id="GO:0016984">
    <property type="term" value="F:ribulose-bisphosphate carboxylase activity"/>
    <property type="evidence" value="ECO:0007669"/>
    <property type="project" value="UniProtKB-UniRule"/>
</dbReference>
<dbReference type="GO" id="GO:0009853">
    <property type="term" value="P:photorespiration"/>
    <property type="evidence" value="ECO:0007669"/>
    <property type="project" value="UniProtKB-KW"/>
</dbReference>
<dbReference type="GO" id="GO:0019253">
    <property type="term" value="P:reductive pentose-phosphate cycle"/>
    <property type="evidence" value="ECO:0007669"/>
    <property type="project" value="UniProtKB-UniRule"/>
</dbReference>
<dbReference type="CDD" id="cd03527">
    <property type="entry name" value="RuBisCO_small"/>
    <property type="match status" value="1"/>
</dbReference>
<dbReference type="FunFam" id="3.30.190.10:FF:000001">
    <property type="entry name" value="Ribulose bisphosphate carboxylase small chain, chloroplastic"/>
    <property type="match status" value="1"/>
</dbReference>
<dbReference type="Gene3D" id="3.30.190.10">
    <property type="entry name" value="Ribulose bisphosphate carboxylase, small subunit"/>
    <property type="match status" value="1"/>
</dbReference>
<dbReference type="HAMAP" id="MF_00859">
    <property type="entry name" value="RuBisCO_S_bact"/>
    <property type="match status" value="1"/>
</dbReference>
<dbReference type="InterPro" id="IPR024681">
    <property type="entry name" value="RuBisCO_ssu"/>
</dbReference>
<dbReference type="InterPro" id="IPR000894">
    <property type="entry name" value="RuBisCO_ssu_dom"/>
</dbReference>
<dbReference type="InterPro" id="IPR024680">
    <property type="entry name" value="RuBisCO_ssu_N"/>
</dbReference>
<dbReference type="InterPro" id="IPR036385">
    <property type="entry name" value="RuBisCO_ssu_sf"/>
</dbReference>
<dbReference type="PANTHER" id="PTHR31262">
    <property type="entry name" value="RIBULOSE BISPHOSPHATE CARBOXYLASE SMALL CHAIN 1, CHLOROPLASTIC"/>
    <property type="match status" value="1"/>
</dbReference>
<dbReference type="PANTHER" id="PTHR31262:SF10">
    <property type="entry name" value="RIBULOSE BISPHOSPHATE CARBOXYLASE SMALL SUBUNIT 1A, CHLOROPLASTIC-RELATED"/>
    <property type="match status" value="1"/>
</dbReference>
<dbReference type="Pfam" id="PF12338">
    <property type="entry name" value="RbcS"/>
    <property type="match status" value="1"/>
</dbReference>
<dbReference type="Pfam" id="PF00101">
    <property type="entry name" value="RuBisCO_small"/>
    <property type="match status" value="1"/>
</dbReference>
<dbReference type="PRINTS" id="PR00152">
    <property type="entry name" value="RUBISCOSMALL"/>
</dbReference>
<dbReference type="SMART" id="SM00961">
    <property type="entry name" value="RuBisCO_small"/>
    <property type="match status" value="1"/>
</dbReference>
<dbReference type="SUPFAM" id="SSF55239">
    <property type="entry name" value="RuBisCO, small subunit"/>
    <property type="match status" value="1"/>
</dbReference>
<accession>P19309</accession>
<name>RBS3_LEMGI</name>
<reference key="1">
    <citation type="journal article" date="1990" name="Plant Mol. Biol.">
        <title>Differential expression of individual genes encoding the small subunit of ribulose-1,5-bisphosphate carboxylase in Lemna gibba.</title>
        <authorList>
            <person name="Silverthorne J."/>
            <person name="Wimpee C.F."/>
            <person name="Yamada T."/>
            <person name="Rolfe S.A."/>
            <person name="Tobin E.M."/>
        </authorList>
    </citation>
    <scope>NUCLEOTIDE SEQUENCE [GENOMIC DNA]</scope>
    <scope>INDUCTION</scope>
</reference>
<keyword id="KW-0113">Calvin cycle</keyword>
<keyword id="KW-0120">Carbon dioxide fixation</keyword>
<keyword id="KW-0150">Chloroplast</keyword>
<keyword id="KW-0601">Photorespiration</keyword>
<keyword id="KW-0602">Photosynthesis</keyword>
<keyword id="KW-0934">Plastid</keyword>
<keyword id="KW-0809">Transit peptide</keyword>
<comment type="function">
    <text evidence="1">RuBisCO catalyzes two reactions: the carboxylation of D-ribulose 1,5-bisphosphate, the primary event in carbon dioxide fixation, as well as the oxidative fragmentation of the pentose substrate. Both reactions occur simultaneously and in competition at the same active site. Although the small subunit is not catalytic it is essential for maximal activity.</text>
</comment>
<comment type="subunit">
    <text evidence="1">Heterohexadecamer of 8 large and 8 small subunits.</text>
</comment>
<comment type="subcellular location">
    <subcellularLocation>
        <location evidence="1">Plastid</location>
        <location evidence="1">Chloroplast</location>
    </subcellularLocation>
</comment>
<comment type="induction">
    <text evidence="2">Accumulates to low levels when grown under continuous white light.</text>
</comment>
<comment type="miscellaneous">
    <text>This protein is coded by one member of a small multigene family.</text>
</comment>
<comment type="miscellaneous">
    <text evidence="1">The basic functional RuBisCO is composed of a large chain homodimer in a 'head-to-tail' conformation. In form I RuBisCO this homodimer is arranged in a barrel-like tetramer with the small subunits forming a tetrameric 'cap' on each end of the 'barrel'.</text>
</comment>
<comment type="similarity">
    <text evidence="1">Belongs to the RuBisCO small chain family.</text>
</comment>
<gene>
    <name evidence="1" type="primary">RBCS3</name>
    <name evidence="3" type="synonym">SSU40A</name>
</gene>
<sequence>MASSMMASTAAAVARAGPAQSSMVPFNACRSSVPFPATRKANNNLSTLPGNGGRVSCMQVWPPEGLKKFETLSYLPPLSVEDLAKEVDYLLRNDWVPCIEFSKEGFVYRENHASPGYYDGRYWTMWKLPMFGCTDASQVIAEVEEAKKAYPEYFVRIIGFDNKRQVQCISFIAYKPT</sequence>
<protein>
    <recommendedName>
        <fullName evidence="1">Ribulose bisphosphate carboxylase small subunit, chloroplastic 3</fullName>
        <shortName evidence="1">RuBisCO small subunit 3</shortName>
        <shortName evidence="3">RuBisCO small subunit SSU40A</shortName>
    </recommendedName>
</protein>